<comment type="function">
    <text evidence="1">Part of the ABC transporter complex CcmAB involved in the biogenesis of c-type cytochromes; once thought to export heme, this seems not to be the case, but its exact role is uncertain. Responsible for energy coupling to the transport system.</text>
</comment>
<comment type="catalytic activity">
    <reaction evidence="1">
        <text>heme b(in) + ATP + H2O = heme b(out) + ADP + phosphate + H(+)</text>
        <dbReference type="Rhea" id="RHEA:19261"/>
        <dbReference type="ChEBI" id="CHEBI:15377"/>
        <dbReference type="ChEBI" id="CHEBI:15378"/>
        <dbReference type="ChEBI" id="CHEBI:30616"/>
        <dbReference type="ChEBI" id="CHEBI:43474"/>
        <dbReference type="ChEBI" id="CHEBI:60344"/>
        <dbReference type="ChEBI" id="CHEBI:456216"/>
        <dbReference type="EC" id="7.6.2.5"/>
    </reaction>
</comment>
<comment type="subunit">
    <text evidence="1">The complex is composed of two ATP-binding proteins (CcmA) and two transmembrane proteins (CcmB).</text>
</comment>
<comment type="subcellular location">
    <subcellularLocation>
        <location evidence="1">Cell inner membrane</location>
        <topology evidence="1">Peripheral membrane protein</topology>
    </subcellularLocation>
</comment>
<comment type="similarity">
    <text evidence="1">Belongs to the ABC transporter superfamily. CcmA exporter (TC 3.A.1.107) family.</text>
</comment>
<feature type="chain" id="PRO_0000271948" description="Cytochrome c biogenesis ATP-binding export protein CcmA">
    <location>
        <begin position="1"/>
        <end position="210"/>
    </location>
</feature>
<feature type="domain" description="ABC transporter" evidence="1">
    <location>
        <begin position="4"/>
        <end position="208"/>
    </location>
</feature>
<feature type="binding site" evidence="1">
    <location>
        <begin position="39"/>
        <end position="46"/>
    </location>
    <ligand>
        <name>ATP</name>
        <dbReference type="ChEBI" id="CHEBI:30616"/>
    </ligand>
</feature>
<evidence type="ECO:0000255" key="1">
    <source>
        <dbReference type="HAMAP-Rule" id="MF_01707"/>
    </source>
</evidence>
<sequence length="210" mass="22682">MKTVPTLSFSKLGCSRGGRQLFQNIDCVLESGHWLYVAGANGVGKTSLLRMVCGLAPIESGEIFWNGTPIHAQADAYRQDLCYLGHLNALQESMTVHENLAFTAALGGMAPDMAQTQSVLAHFGVAGRDRQLVRHLSQGQKRRVALSRLALSQARLWVLDEPFVAMDEAGVRMLADLIAAHLTQGGLAVLTSHQQVDIGAIPAQLLELRA</sequence>
<accession>Q21QL9</accession>
<gene>
    <name evidence="1" type="primary">ccmA</name>
    <name type="ordered locus">Rfer_0045</name>
</gene>
<keyword id="KW-0067">ATP-binding</keyword>
<keyword id="KW-0997">Cell inner membrane</keyword>
<keyword id="KW-1003">Cell membrane</keyword>
<keyword id="KW-0201">Cytochrome c-type biogenesis</keyword>
<keyword id="KW-0472">Membrane</keyword>
<keyword id="KW-0547">Nucleotide-binding</keyword>
<keyword id="KW-1185">Reference proteome</keyword>
<keyword id="KW-1278">Translocase</keyword>
<keyword id="KW-0813">Transport</keyword>
<proteinExistence type="inferred from homology"/>
<name>CCMA_ALBFT</name>
<organism>
    <name type="scientific">Albidiferax ferrireducens (strain ATCC BAA-621 / DSM 15236 / T118)</name>
    <name type="common">Rhodoferax ferrireducens</name>
    <dbReference type="NCBI Taxonomy" id="338969"/>
    <lineage>
        <taxon>Bacteria</taxon>
        <taxon>Pseudomonadati</taxon>
        <taxon>Pseudomonadota</taxon>
        <taxon>Betaproteobacteria</taxon>
        <taxon>Burkholderiales</taxon>
        <taxon>Comamonadaceae</taxon>
        <taxon>Rhodoferax</taxon>
    </lineage>
</organism>
<dbReference type="EC" id="7.6.2.5" evidence="1"/>
<dbReference type="EMBL" id="CP000267">
    <property type="protein sequence ID" value="ABD67807.1"/>
    <property type="molecule type" value="Genomic_DNA"/>
</dbReference>
<dbReference type="RefSeq" id="WP_011462380.1">
    <property type="nucleotide sequence ID" value="NC_007908.1"/>
</dbReference>
<dbReference type="SMR" id="Q21QL9"/>
<dbReference type="STRING" id="338969.Rfer_0045"/>
<dbReference type="KEGG" id="rfr:Rfer_0045"/>
<dbReference type="eggNOG" id="COG4133">
    <property type="taxonomic scope" value="Bacteria"/>
</dbReference>
<dbReference type="HOGENOM" id="CLU_000604_1_2_4"/>
<dbReference type="Proteomes" id="UP000008332">
    <property type="component" value="Chromosome"/>
</dbReference>
<dbReference type="GO" id="GO:0005886">
    <property type="term" value="C:plasma membrane"/>
    <property type="evidence" value="ECO:0007669"/>
    <property type="project" value="UniProtKB-SubCell"/>
</dbReference>
<dbReference type="GO" id="GO:0015439">
    <property type="term" value="F:ABC-type heme transporter activity"/>
    <property type="evidence" value="ECO:0007669"/>
    <property type="project" value="UniProtKB-EC"/>
</dbReference>
<dbReference type="GO" id="GO:0005524">
    <property type="term" value="F:ATP binding"/>
    <property type="evidence" value="ECO:0007669"/>
    <property type="project" value="UniProtKB-KW"/>
</dbReference>
<dbReference type="GO" id="GO:0016887">
    <property type="term" value="F:ATP hydrolysis activity"/>
    <property type="evidence" value="ECO:0007669"/>
    <property type="project" value="InterPro"/>
</dbReference>
<dbReference type="GO" id="GO:0017004">
    <property type="term" value="P:cytochrome complex assembly"/>
    <property type="evidence" value="ECO:0007669"/>
    <property type="project" value="UniProtKB-KW"/>
</dbReference>
<dbReference type="Gene3D" id="3.40.50.300">
    <property type="entry name" value="P-loop containing nucleotide triphosphate hydrolases"/>
    <property type="match status" value="1"/>
</dbReference>
<dbReference type="InterPro" id="IPR003593">
    <property type="entry name" value="AAA+_ATPase"/>
</dbReference>
<dbReference type="InterPro" id="IPR003439">
    <property type="entry name" value="ABC_transporter-like_ATP-bd"/>
</dbReference>
<dbReference type="InterPro" id="IPR017871">
    <property type="entry name" value="ABC_transporter-like_CS"/>
</dbReference>
<dbReference type="InterPro" id="IPR005895">
    <property type="entry name" value="ABC_transptr_haem_export_CcmA"/>
</dbReference>
<dbReference type="InterPro" id="IPR027417">
    <property type="entry name" value="P-loop_NTPase"/>
</dbReference>
<dbReference type="NCBIfam" id="TIGR01189">
    <property type="entry name" value="ccmA"/>
    <property type="match status" value="1"/>
</dbReference>
<dbReference type="NCBIfam" id="NF010061">
    <property type="entry name" value="PRK13538.1"/>
    <property type="match status" value="1"/>
</dbReference>
<dbReference type="PANTHER" id="PTHR43499">
    <property type="entry name" value="ABC TRANSPORTER I FAMILY MEMBER 1"/>
    <property type="match status" value="1"/>
</dbReference>
<dbReference type="PANTHER" id="PTHR43499:SF1">
    <property type="entry name" value="ABC TRANSPORTER I FAMILY MEMBER 1"/>
    <property type="match status" value="1"/>
</dbReference>
<dbReference type="Pfam" id="PF00005">
    <property type="entry name" value="ABC_tran"/>
    <property type="match status" value="1"/>
</dbReference>
<dbReference type="SMART" id="SM00382">
    <property type="entry name" value="AAA"/>
    <property type="match status" value="1"/>
</dbReference>
<dbReference type="SUPFAM" id="SSF52540">
    <property type="entry name" value="P-loop containing nucleoside triphosphate hydrolases"/>
    <property type="match status" value="1"/>
</dbReference>
<dbReference type="PROSITE" id="PS00211">
    <property type="entry name" value="ABC_TRANSPORTER_1"/>
    <property type="match status" value="1"/>
</dbReference>
<dbReference type="PROSITE" id="PS50893">
    <property type="entry name" value="ABC_TRANSPORTER_2"/>
    <property type="match status" value="1"/>
</dbReference>
<dbReference type="PROSITE" id="PS51243">
    <property type="entry name" value="CCMA"/>
    <property type="match status" value="1"/>
</dbReference>
<reference key="1">
    <citation type="submission" date="2006-02" db="EMBL/GenBank/DDBJ databases">
        <title>Complete sequence of chromosome of Rhodoferax ferrireducens DSM 15236.</title>
        <authorList>
            <person name="Copeland A."/>
            <person name="Lucas S."/>
            <person name="Lapidus A."/>
            <person name="Barry K."/>
            <person name="Detter J.C."/>
            <person name="Glavina del Rio T."/>
            <person name="Hammon N."/>
            <person name="Israni S."/>
            <person name="Pitluck S."/>
            <person name="Brettin T."/>
            <person name="Bruce D."/>
            <person name="Han C."/>
            <person name="Tapia R."/>
            <person name="Gilna P."/>
            <person name="Kiss H."/>
            <person name="Schmutz J."/>
            <person name="Larimer F."/>
            <person name="Land M."/>
            <person name="Kyrpides N."/>
            <person name="Ivanova N."/>
            <person name="Richardson P."/>
        </authorList>
    </citation>
    <scope>NUCLEOTIDE SEQUENCE [LARGE SCALE GENOMIC DNA]</scope>
    <source>
        <strain>ATCC BAA-621 / DSM 15236 / T118</strain>
    </source>
</reference>
<protein>
    <recommendedName>
        <fullName evidence="1">Cytochrome c biogenesis ATP-binding export protein CcmA</fullName>
        <ecNumber evidence="1">7.6.2.5</ecNumber>
    </recommendedName>
    <alternativeName>
        <fullName evidence="1">Heme exporter protein A</fullName>
    </alternativeName>
</protein>